<dbReference type="EC" id="5.3.1.26" evidence="1"/>
<dbReference type="EMBL" id="CP000918">
    <property type="protein sequence ID" value="ACO17944.1"/>
    <property type="molecule type" value="Genomic_DNA"/>
</dbReference>
<dbReference type="RefSeq" id="WP_001216910.1">
    <property type="nucleotide sequence ID" value="NC_012468.1"/>
</dbReference>
<dbReference type="SMR" id="C1C7G1"/>
<dbReference type="KEGG" id="snm:SP70585_1242"/>
<dbReference type="HOGENOM" id="CLU_091396_2_0_9"/>
<dbReference type="UniPathway" id="UPA00702">
    <property type="reaction ID" value="UER00714"/>
</dbReference>
<dbReference type="Proteomes" id="UP000002211">
    <property type="component" value="Chromosome"/>
</dbReference>
<dbReference type="GO" id="GO:0050044">
    <property type="term" value="F:galactose-6-phosphate isomerase activity"/>
    <property type="evidence" value="ECO:0007669"/>
    <property type="project" value="UniProtKB-UniRule"/>
</dbReference>
<dbReference type="GO" id="GO:0004751">
    <property type="term" value="F:ribose-5-phosphate isomerase activity"/>
    <property type="evidence" value="ECO:0007669"/>
    <property type="project" value="TreeGrafter"/>
</dbReference>
<dbReference type="GO" id="GO:0019316">
    <property type="term" value="P:D-allose catabolic process"/>
    <property type="evidence" value="ECO:0007669"/>
    <property type="project" value="TreeGrafter"/>
</dbReference>
<dbReference type="GO" id="GO:0019388">
    <property type="term" value="P:galactose catabolic process"/>
    <property type="evidence" value="ECO:0007669"/>
    <property type="project" value="UniProtKB-UniPathway"/>
</dbReference>
<dbReference type="GO" id="GO:0019512">
    <property type="term" value="P:lactose catabolic process via tagatose-6-phosphate"/>
    <property type="evidence" value="ECO:0007669"/>
    <property type="project" value="UniProtKB-UniRule"/>
</dbReference>
<dbReference type="GO" id="GO:0009052">
    <property type="term" value="P:pentose-phosphate shunt, non-oxidative branch"/>
    <property type="evidence" value="ECO:0007669"/>
    <property type="project" value="TreeGrafter"/>
</dbReference>
<dbReference type="Gene3D" id="3.40.1400.10">
    <property type="entry name" value="Sugar-phosphate isomerase, RpiB/LacA/LacB"/>
    <property type="match status" value="1"/>
</dbReference>
<dbReference type="HAMAP" id="MF_01556">
    <property type="entry name" value="LacB"/>
    <property type="match status" value="1"/>
</dbReference>
<dbReference type="InterPro" id="IPR004784">
    <property type="entry name" value="LacB"/>
</dbReference>
<dbReference type="InterPro" id="IPR003500">
    <property type="entry name" value="RpiB_LacA_LacB"/>
</dbReference>
<dbReference type="InterPro" id="IPR036569">
    <property type="entry name" value="RpiB_LacA_LacB_sf"/>
</dbReference>
<dbReference type="NCBIfam" id="TIGR01119">
    <property type="entry name" value="lacB"/>
    <property type="match status" value="1"/>
</dbReference>
<dbReference type="NCBIfam" id="NF004051">
    <property type="entry name" value="PRK05571.1"/>
    <property type="match status" value="1"/>
</dbReference>
<dbReference type="NCBIfam" id="NF006381">
    <property type="entry name" value="PRK08622.1"/>
    <property type="match status" value="1"/>
</dbReference>
<dbReference type="NCBIfam" id="NF009258">
    <property type="entry name" value="PRK12615.1"/>
    <property type="match status" value="1"/>
</dbReference>
<dbReference type="NCBIfam" id="TIGR00689">
    <property type="entry name" value="rpiB_lacA_lacB"/>
    <property type="match status" value="1"/>
</dbReference>
<dbReference type="PANTHER" id="PTHR30345:SF0">
    <property type="entry name" value="DNA DAMAGE-REPAIR_TOLERATION PROTEIN DRT102"/>
    <property type="match status" value="1"/>
</dbReference>
<dbReference type="PANTHER" id="PTHR30345">
    <property type="entry name" value="RIBOSE-5-PHOSPHATE ISOMERASE B"/>
    <property type="match status" value="1"/>
</dbReference>
<dbReference type="Pfam" id="PF02502">
    <property type="entry name" value="LacAB_rpiB"/>
    <property type="match status" value="1"/>
</dbReference>
<dbReference type="PIRSF" id="PIRSF005384">
    <property type="entry name" value="RpiB_LacA_B"/>
    <property type="match status" value="1"/>
</dbReference>
<dbReference type="SUPFAM" id="SSF89623">
    <property type="entry name" value="Ribose/Galactose isomerase RpiB/AlsB"/>
    <property type="match status" value="1"/>
</dbReference>
<evidence type="ECO:0000255" key="1">
    <source>
        <dbReference type="HAMAP-Rule" id="MF_01556"/>
    </source>
</evidence>
<comment type="catalytic activity">
    <reaction evidence="1">
        <text>aldehydo-D-galactose 6-phosphate = keto-D-tagatose 6-phosphate</text>
        <dbReference type="Rhea" id="RHEA:13033"/>
        <dbReference type="ChEBI" id="CHEBI:58255"/>
        <dbReference type="ChEBI" id="CHEBI:134283"/>
        <dbReference type="EC" id="5.3.1.26"/>
    </reaction>
</comment>
<comment type="pathway">
    <text evidence="1">Carbohydrate metabolism; D-galactose 6-phosphate degradation; D-tagatose 6-phosphate from D-galactose 6-phosphate: step 1/1.</text>
</comment>
<comment type="subunit">
    <text evidence="1">Heteromultimeric protein consisting of LacA and LacB.</text>
</comment>
<comment type="similarity">
    <text evidence="1">Belongs to the LacAB/RpiB family.</text>
</comment>
<proteinExistence type="inferred from homology"/>
<protein>
    <recommendedName>
        <fullName evidence="1">Galactose-6-phosphate isomerase subunit LacB</fullName>
        <ecNumber evidence="1">5.3.1.26</ecNumber>
    </recommendedName>
</protein>
<feature type="chain" id="PRO_1000185403" description="Galactose-6-phosphate isomerase subunit LacB">
    <location>
        <begin position="1"/>
        <end position="171"/>
    </location>
</feature>
<sequence length="171" mass="18958">MRIAIGCDHIVTDEKMAVSEFLKSKGYEVIDFGTYDHTRTHYPIFGKKVGEAVTSGQADLGVCICGTGVGINNAVNKVPGVRSALVRDMTTALYAKEQLNANVIGFGGKITGELLMCDIIEAFIHAEYKPSEENKKLIAKIEHLESHNAQQTDANFFTEFLEKWDRGEYHD</sequence>
<organism>
    <name type="scientific">Streptococcus pneumoniae (strain 70585)</name>
    <dbReference type="NCBI Taxonomy" id="488221"/>
    <lineage>
        <taxon>Bacteria</taxon>
        <taxon>Bacillati</taxon>
        <taxon>Bacillota</taxon>
        <taxon>Bacilli</taxon>
        <taxon>Lactobacillales</taxon>
        <taxon>Streptococcaceae</taxon>
        <taxon>Streptococcus</taxon>
    </lineage>
</organism>
<name>LACB_STRP7</name>
<gene>
    <name evidence="1" type="primary">lacB</name>
    <name type="ordered locus">SP70585_1242</name>
</gene>
<keyword id="KW-0413">Isomerase</keyword>
<keyword id="KW-0423">Lactose metabolism</keyword>
<reference key="1">
    <citation type="journal article" date="2010" name="Genome Biol.">
        <title>Structure and dynamics of the pan-genome of Streptococcus pneumoniae and closely related species.</title>
        <authorList>
            <person name="Donati C."/>
            <person name="Hiller N.L."/>
            <person name="Tettelin H."/>
            <person name="Muzzi A."/>
            <person name="Croucher N.J."/>
            <person name="Angiuoli S.V."/>
            <person name="Oggioni M."/>
            <person name="Dunning Hotopp J.C."/>
            <person name="Hu F.Z."/>
            <person name="Riley D.R."/>
            <person name="Covacci A."/>
            <person name="Mitchell T.J."/>
            <person name="Bentley S.D."/>
            <person name="Kilian M."/>
            <person name="Ehrlich G.D."/>
            <person name="Rappuoli R."/>
            <person name="Moxon E.R."/>
            <person name="Masignani V."/>
        </authorList>
    </citation>
    <scope>NUCLEOTIDE SEQUENCE [LARGE SCALE GENOMIC DNA]</scope>
    <source>
        <strain>70585</strain>
    </source>
</reference>
<accession>C1C7G1</accession>